<dbReference type="EC" id="2.3.1.181" evidence="1"/>
<dbReference type="EMBL" id="CP000111">
    <property type="protein sequence ID" value="ABB49458.1"/>
    <property type="molecule type" value="Genomic_DNA"/>
</dbReference>
<dbReference type="RefSeq" id="WP_011375958.1">
    <property type="nucleotide sequence ID" value="NC_007577.1"/>
</dbReference>
<dbReference type="SMR" id="Q31CD7"/>
<dbReference type="STRING" id="74546.PMT9312_0397"/>
<dbReference type="KEGG" id="pmi:PMT9312_0397"/>
<dbReference type="eggNOG" id="COG0321">
    <property type="taxonomic scope" value="Bacteria"/>
</dbReference>
<dbReference type="HOGENOM" id="CLU_035168_1_3_3"/>
<dbReference type="OrthoDB" id="9787061at2"/>
<dbReference type="UniPathway" id="UPA00538">
    <property type="reaction ID" value="UER00592"/>
</dbReference>
<dbReference type="Proteomes" id="UP000002715">
    <property type="component" value="Chromosome"/>
</dbReference>
<dbReference type="GO" id="GO:0005737">
    <property type="term" value="C:cytoplasm"/>
    <property type="evidence" value="ECO:0007669"/>
    <property type="project" value="UniProtKB-SubCell"/>
</dbReference>
<dbReference type="GO" id="GO:0033819">
    <property type="term" value="F:lipoyl(octanoyl) transferase activity"/>
    <property type="evidence" value="ECO:0007669"/>
    <property type="project" value="UniProtKB-EC"/>
</dbReference>
<dbReference type="GO" id="GO:0036211">
    <property type="term" value="P:protein modification process"/>
    <property type="evidence" value="ECO:0007669"/>
    <property type="project" value="InterPro"/>
</dbReference>
<dbReference type="CDD" id="cd16444">
    <property type="entry name" value="LipB"/>
    <property type="match status" value="1"/>
</dbReference>
<dbReference type="Gene3D" id="3.30.930.10">
    <property type="entry name" value="Bira Bifunctional Protein, Domain 2"/>
    <property type="match status" value="1"/>
</dbReference>
<dbReference type="HAMAP" id="MF_00013">
    <property type="entry name" value="LipB"/>
    <property type="match status" value="1"/>
</dbReference>
<dbReference type="InterPro" id="IPR045864">
    <property type="entry name" value="aa-tRNA-synth_II/BPL/LPL"/>
</dbReference>
<dbReference type="InterPro" id="IPR004143">
    <property type="entry name" value="BPL_LPL_catalytic"/>
</dbReference>
<dbReference type="InterPro" id="IPR000544">
    <property type="entry name" value="Octanoyltransferase"/>
</dbReference>
<dbReference type="InterPro" id="IPR020605">
    <property type="entry name" value="Octanoyltransferase_CS"/>
</dbReference>
<dbReference type="NCBIfam" id="TIGR00214">
    <property type="entry name" value="lipB"/>
    <property type="match status" value="1"/>
</dbReference>
<dbReference type="PANTHER" id="PTHR10993:SF7">
    <property type="entry name" value="LIPOYLTRANSFERASE 2, MITOCHONDRIAL-RELATED"/>
    <property type="match status" value="1"/>
</dbReference>
<dbReference type="PANTHER" id="PTHR10993">
    <property type="entry name" value="OCTANOYLTRANSFERASE"/>
    <property type="match status" value="1"/>
</dbReference>
<dbReference type="Pfam" id="PF21948">
    <property type="entry name" value="LplA-B_cat"/>
    <property type="match status" value="1"/>
</dbReference>
<dbReference type="PIRSF" id="PIRSF016262">
    <property type="entry name" value="LPLase"/>
    <property type="match status" value="1"/>
</dbReference>
<dbReference type="SUPFAM" id="SSF55681">
    <property type="entry name" value="Class II aaRS and biotin synthetases"/>
    <property type="match status" value="1"/>
</dbReference>
<dbReference type="PROSITE" id="PS51733">
    <property type="entry name" value="BPL_LPL_CATALYTIC"/>
    <property type="match status" value="1"/>
</dbReference>
<dbReference type="PROSITE" id="PS01313">
    <property type="entry name" value="LIPB"/>
    <property type="match status" value="1"/>
</dbReference>
<accession>Q31CD7</accession>
<evidence type="ECO:0000255" key="1">
    <source>
        <dbReference type="HAMAP-Rule" id="MF_00013"/>
    </source>
</evidence>
<evidence type="ECO:0000255" key="2">
    <source>
        <dbReference type="PROSITE-ProRule" id="PRU01067"/>
    </source>
</evidence>
<comment type="function">
    <text evidence="1">Catalyzes the transfer of endogenously produced octanoic acid from octanoyl-acyl-carrier-protein onto the lipoyl domains of lipoate-dependent enzymes. Lipoyl-ACP can also act as a substrate although octanoyl-ACP is likely to be the physiological substrate.</text>
</comment>
<comment type="catalytic activity">
    <reaction evidence="1">
        <text>octanoyl-[ACP] + L-lysyl-[protein] = N(6)-octanoyl-L-lysyl-[protein] + holo-[ACP] + H(+)</text>
        <dbReference type="Rhea" id="RHEA:17665"/>
        <dbReference type="Rhea" id="RHEA-COMP:9636"/>
        <dbReference type="Rhea" id="RHEA-COMP:9685"/>
        <dbReference type="Rhea" id="RHEA-COMP:9752"/>
        <dbReference type="Rhea" id="RHEA-COMP:9928"/>
        <dbReference type="ChEBI" id="CHEBI:15378"/>
        <dbReference type="ChEBI" id="CHEBI:29969"/>
        <dbReference type="ChEBI" id="CHEBI:64479"/>
        <dbReference type="ChEBI" id="CHEBI:78463"/>
        <dbReference type="ChEBI" id="CHEBI:78809"/>
        <dbReference type="EC" id="2.3.1.181"/>
    </reaction>
</comment>
<comment type="pathway">
    <text evidence="1">Protein modification; protein lipoylation via endogenous pathway; protein N(6)-(lipoyl)lysine from octanoyl-[acyl-carrier-protein]: step 1/2.</text>
</comment>
<comment type="subcellular location">
    <subcellularLocation>
        <location evidence="1">Cytoplasm</location>
    </subcellularLocation>
</comment>
<comment type="miscellaneous">
    <text evidence="1">In the reaction, the free carboxyl group of octanoic acid is attached via an amide linkage to the epsilon-amino group of a specific lysine residue of lipoyl domains of lipoate-dependent enzymes.</text>
</comment>
<comment type="similarity">
    <text evidence="1">Belongs to the LipB family.</text>
</comment>
<reference key="1">
    <citation type="journal article" date="2006" name="Science">
        <title>Genomic islands and the ecology and evolution of Prochlorococcus.</title>
        <authorList>
            <person name="Coleman M.L."/>
            <person name="Sullivan M.B."/>
            <person name="Martiny A.C."/>
            <person name="Steglich C."/>
            <person name="Barry K."/>
            <person name="Delong E.F."/>
            <person name="Chisholm S.W."/>
        </authorList>
    </citation>
    <scope>NUCLEOTIDE SEQUENCE [LARGE SCALE GENOMIC DNA]</scope>
    <source>
        <strain>MIT 9312</strain>
    </source>
</reference>
<feature type="chain" id="PRO_0000242742" description="Octanoyltransferase">
    <location>
        <begin position="1"/>
        <end position="216"/>
    </location>
</feature>
<feature type="domain" description="BPL/LPL catalytic" evidence="2">
    <location>
        <begin position="35"/>
        <end position="213"/>
    </location>
</feature>
<feature type="active site" description="Acyl-thioester intermediate" evidence="1">
    <location>
        <position position="175"/>
    </location>
</feature>
<feature type="binding site" evidence="1">
    <location>
        <begin position="77"/>
        <end position="84"/>
    </location>
    <ligand>
        <name>substrate</name>
    </ligand>
</feature>
<feature type="binding site" evidence="1">
    <location>
        <begin position="144"/>
        <end position="146"/>
    </location>
    <ligand>
        <name>substrate</name>
    </ligand>
</feature>
<feature type="binding site" evidence="1">
    <location>
        <begin position="157"/>
        <end position="159"/>
    </location>
    <ligand>
        <name>substrate</name>
    </ligand>
</feature>
<feature type="site" description="Lowers pKa of active site Cys" evidence="1">
    <location>
        <position position="141"/>
    </location>
</feature>
<sequence length="216" mass="25236">MVNRTAIIKQPDNISCFNDVYKLQKEYQEALILDNSNPDFIWIGEHQLCYTLGRGSNYDNLLFSLNDEKYDVFKIDRGGEVTCHMPGQLVTYLILDLKNFNKDLNWYLRKIEKIIIKILGNFNIDCHLKKGFTGVWIENKKIASIGIGCRRWITINGFSINFNCELENFNKIVPCGIENCLMANMIDYNKNLNIKEVKKIVKKIIQEEFNFDFVSK</sequence>
<organism>
    <name type="scientific">Prochlorococcus marinus (strain MIT 9312)</name>
    <dbReference type="NCBI Taxonomy" id="74546"/>
    <lineage>
        <taxon>Bacteria</taxon>
        <taxon>Bacillati</taxon>
        <taxon>Cyanobacteriota</taxon>
        <taxon>Cyanophyceae</taxon>
        <taxon>Synechococcales</taxon>
        <taxon>Prochlorococcaceae</taxon>
        <taxon>Prochlorococcus</taxon>
    </lineage>
</organism>
<proteinExistence type="inferred from homology"/>
<keyword id="KW-0012">Acyltransferase</keyword>
<keyword id="KW-0963">Cytoplasm</keyword>
<keyword id="KW-0808">Transferase</keyword>
<name>LIPB_PROM9</name>
<protein>
    <recommendedName>
        <fullName evidence="1">Octanoyltransferase</fullName>
        <ecNumber evidence="1">2.3.1.181</ecNumber>
    </recommendedName>
    <alternativeName>
        <fullName evidence="1">Lipoate-protein ligase B</fullName>
    </alternativeName>
    <alternativeName>
        <fullName evidence="1">Lipoyl/octanoyl transferase</fullName>
    </alternativeName>
    <alternativeName>
        <fullName evidence="1">Octanoyl-[acyl-carrier-protein]-protein N-octanoyltransferase</fullName>
    </alternativeName>
</protein>
<gene>
    <name evidence="1" type="primary">lipB</name>
    <name type="ordered locus">PMT9312_0397</name>
</gene>